<name>NEP1_YEAST</name>
<dbReference type="EC" id="2.1.1.260" evidence="6"/>
<dbReference type="EMBL" id="U17246">
    <property type="protein sequence ID" value="AAB67457.1"/>
    <property type="molecule type" value="Genomic_DNA"/>
</dbReference>
<dbReference type="EMBL" id="AY557941">
    <property type="protein sequence ID" value="AAS56267.1"/>
    <property type="molecule type" value="Genomic_DNA"/>
</dbReference>
<dbReference type="EMBL" id="BK006945">
    <property type="protein sequence ID" value="DAA09505.1"/>
    <property type="molecule type" value="Genomic_DNA"/>
</dbReference>
<dbReference type="PIR" id="S51431">
    <property type="entry name" value="S51431"/>
</dbReference>
<dbReference type="RefSeq" id="NP_013287.1">
    <property type="nucleotide sequence ID" value="NM_001182073.1"/>
</dbReference>
<dbReference type="PDB" id="2V3J">
    <property type="method" value="X-ray"/>
    <property type="resolution" value="2.00 A"/>
    <property type="chains" value="A=1-252"/>
</dbReference>
<dbReference type="PDB" id="2V3K">
    <property type="method" value="X-ray"/>
    <property type="resolution" value="2.00 A"/>
    <property type="chains" value="A=1-252"/>
</dbReference>
<dbReference type="PDB" id="3OII">
    <property type="method" value="X-ray"/>
    <property type="resolution" value="1.85 A"/>
    <property type="chains" value="A/B=1-252"/>
</dbReference>
<dbReference type="PDB" id="3OIJ">
    <property type="method" value="X-ray"/>
    <property type="resolution" value="3.00 A"/>
    <property type="chains" value="A/B=1-252"/>
</dbReference>
<dbReference type="PDB" id="3OIN">
    <property type="method" value="X-ray"/>
    <property type="resolution" value="1.90 A"/>
    <property type="chains" value="A/B=1-252"/>
</dbReference>
<dbReference type="PDB" id="5JPQ">
    <property type="method" value="EM"/>
    <property type="resolution" value="7.30 A"/>
    <property type="chains" value="e/f=1-252"/>
</dbReference>
<dbReference type="PDB" id="5TZS">
    <property type="method" value="EM"/>
    <property type="resolution" value="5.10 A"/>
    <property type="chains" value="j/k=1-252"/>
</dbReference>
<dbReference type="PDB" id="5WLC">
    <property type="method" value="EM"/>
    <property type="resolution" value="3.80 A"/>
    <property type="chains" value="SJ/SK=1-252"/>
</dbReference>
<dbReference type="PDB" id="5WYJ">
    <property type="method" value="EM"/>
    <property type="resolution" value="8.70 A"/>
    <property type="chains" value="E1/E2=1-252"/>
</dbReference>
<dbReference type="PDB" id="5WYK">
    <property type="method" value="EM"/>
    <property type="resolution" value="4.50 A"/>
    <property type="chains" value="E1/E2=1-252"/>
</dbReference>
<dbReference type="PDB" id="6KE6">
    <property type="method" value="EM"/>
    <property type="resolution" value="3.40 A"/>
    <property type="chains" value="RG/RH=1-252"/>
</dbReference>
<dbReference type="PDB" id="6LQP">
    <property type="method" value="EM"/>
    <property type="resolution" value="3.20 A"/>
    <property type="chains" value="RG/RH=1-252"/>
</dbReference>
<dbReference type="PDB" id="6LQQ">
    <property type="method" value="EM"/>
    <property type="resolution" value="4.10 A"/>
    <property type="chains" value="RG/RH=1-252"/>
</dbReference>
<dbReference type="PDB" id="6LQR">
    <property type="method" value="EM"/>
    <property type="resolution" value="8.60 A"/>
    <property type="chains" value="RG/RH=1-252"/>
</dbReference>
<dbReference type="PDB" id="6LQS">
    <property type="method" value="EM"/>
    <property type="resolution" value="3.80 A"/>
    <property type="chains" value="RG/RH=1-252"/>
</dbReference>
<dbReference type="PDB" id="6LQT">
    <property type="method" value="EM"/>
    <property type="resolution" value="4.90 A"/>
    <property type="chains" value="RH=1-252"/>
</dbReference>
<dbReference type="PDB" id="6LQU">
    <property type="method" value="EM"/>
    <property type="resolution" value="3.70 A"/>
    <property type="chains" value="RG/RH=1-252"/>
</dbReference>
<dbReference type="PDB" id="6LQV">
    <property type="method" value="EM"/>
    <property type="resolution" value="4.80 A"/>
    <property type="chains" value="RG/RH=1-252"/>
</dbReference>
<dbReference type="PDB" id="6ZQA">
    <property type="method" value="EM"/>
    <property type="resolution" value="4.40 A"/>
    <property type="chains" value="JF/JG=1-252"/>
</dbReference>
<dbReference type="PDB" id="6ZQB">
    <property type="method" value="EM"/>
    <property type="resolution" value="3.90 A"/>
    <property type="chains" value="JF/JG=1-252"/>
</dbReference>
<dbReference type="PDB" id="6ZQC">
    <property type="method" value="EM"/>
    <property type="resolution" value="3.80 A"/>
    <property type="chains" value="JF/JG=1-252"/>
</dbReference>
<dbReference type="PDB" id="6ZQD">
    <property type="method" value="EM"/>
    <property type="resolution" value="3.80 A"/>
    <property type="chains" value="JF/JG=1-252"/>
</dbReference>
<dbReference type="PDB" id="6ZQE">
    <property type="method" value="EM"/>
    <property type="resolution" value="7.10 A"/>
    <property type="chains" value="JF/JG=1-252"/>
</dbReference>
<dbReference type="PDB" id="6ZQF">
    <property type="method" value="EM"/>
    <property type="resolution" value="4.90 A"/>
    <property type="chains" value="JF/JG=1-252"/>
</dbReference>
<dbReference type="PDB" id="6ZQG">
    <property type="method" value="EM"/>
    <property type="resolution" value="3.50 A"/>
    <property type="chains" value="JF/JG=1-252"/>
</dbReference>
<dbReference type="PDB" id="7AJT">
    <property type="method" value="EM"/>
    <property type="resolution" value="4.60 A"/>
    <property type="chains" value="JF/JG=1-252"/>
</dbReference>
<dbReference type="PDB" id="7AJU">
    <property type="method" value="EM"/>
    <property type="resolution" value="3.80 A"/>
    <property type="chains" value="JF/JG=1-252"/>
</dbReference>
<dbReference type="PDB" id="7D4I">
    <property type="method" value="EM"/>
    <property type="resolution" value="4.00 A"/>
    <property type="chains" value="RG/RH=1-252"/>
</dbReference>
<dbReference type="PDB" id="7D5S">
    <property type="method" value="EM"/>
    <property type="resolution" value="4.60 A"/>
    <property type="chains" value="RG/RH=1-252"/>
</dbReference>
<dbReference type="PDB" id="7D63">
    <property type="method" value="EM"/>
    <property type="resolution" value="12.30 A"/>
    <property type="chains" value="RG/RH=1-252"/>
</dbReference>
<dbReference type="PDB" id="7SUK">
    <property type="method" value="EM"/>
    <property type="resolution" value="3.99 A"/>
    <property type="chains" value="SJ/SK=16-251"/>
</dbReference>
<dbReference type="PDBsum" id="2V3J"/>
<dbReference type="PDBsum" id="2V3K"/>
<dbReference type="PDBsum" id="3OII"/>
<dbReference type="PDBsum" id="3OIJ"/>
<dbReference type="PDBsum" id="3OIN"/>
<dbReference type="PDBsum" id="5JPQ"/>
<dbReference type="PDBsum" id="5TZS"/>
<dbReference type="PDBsum" id="5WLC"/>
<dbReference type="PDBsum" id="5WYJ"/>
<dbReference type="PDBsum" id="5WYK"/>
<dbReference type="PDBsum" id="6KE6"/>
<dbReference type="PDBsum" id="6LQP"/>
<dbReference type="PDBsum" id="6LQQ"/>
<dbReference type="PDBsum" id="6LQR"/>
<dbReference type="PDBsum" id="6LQS"/>
<dbReference type="PDBsum" id="6LQT"/>
<dbReference type="PDBsum" id="6LQU"/>
<dbReference type="PDBsum" id="6LQV"/>
<dbReference type="PDBsum" id="6ZQA"/>
<dbReference type="PDBsum" id="6ZQB"/>
<dbReference type="PDBsum" id="6ZQC"/>
<dbReference type="PDBsum" id="6ZQD"/>
<dbReference type="PDBsum" id="6ZQE"/>
<dbReference type="PDBsum" id="6ZQF"/>
<dbReference type="PDBsum" id="6ZQG"/>
<dbReference type="PDBsum" id="7AJT"/>
<dbReference type="PDBsum" id="7AJU"/>
<dbReference type="PDBsum" id="7D4I"/>
<dbReference type="PDBsum" id="7D5S"/>
<dbReference type="PDBsum" id="7D63"/>
<dbReference type="PDBsum" id="7SUK"/>
<dbReference type="EMDB" id="EMD-0949"/>
<dbReference type="EMDB" id="EMD-0950"/>
<dbReference type="EMDB" id="EMD-0951"/>
<dbReference type="EMDB" id="EMD-0952"/>
<dbReference type="EMDB" id="EMD-0953"/>
<dbReference type="EMDB" id="EMD-0954"/>
<dbReference type="EMDB" id="EMD-0955"/>
<dbReference type="EMDB" id="EMD-11357"/>
<dbReference type="EMDB" id="EMD-11358"/>
<dbReference type="EMDB" id="EMD-11359"/>
<dbReference type="EMDB" id="EMD-11360"/>
<dbReference type="EMDB" id="EMD-11361"/>
<dbReference type="EMDB" id="EMD-11362"/>
<dbReference type="EMDB" id="EMD-11363"/>
<dbReference type="EMDB" id="EMD-11807"/>
<dbReference type="EMDB" id="EMD-11808"/>
<dbReference type="EMDB" id="EMD-25441"/>
<dbReference type="EMDB" id="EMD-30574"/>
<dbReference type="EMDB" id="EMD-30584"/>
<dbReference type="EMDB" id="EMD-30588"/>
<dbReference type="EMDB" id="EMD-6695"/>
<dbReference type="EMDB" id="EMD-6696"/>
<dbReference type="EMDB" id="EMD-8473"/>
<dbReference type="EMDB" id="EMD-8859"/>
<dbReference type="EMDB" id="EMD-9964"/>
<dbReference type="SMR" id="Q06287"/>
<dbReference type="BioGRID" id="31456">
    <property type="interactions" value="504"/>
</dbReference>
<dbReference type="ComplexPortal" id="CPX-1604">
    <property type="entry name" value="Small ribosomal subunit processome"/>
</dbReference>
<dbReference type="DIP" id="DIP-6504N"/>
<dbReference type="FunCoup" id="Q06287">
    <property type="interactions" value="1147"/>
</dbReference>
<dbReference type="IntAct" id="Q06287">
    <property type="interactions" value="88"/>
</dbReference>
<dbReference type="STRING" id="4932.YLR186W"/>
<dbReference type="iPTMnet" id="Q06287"/>
<dbReference type="PaxDb" id="4932-YLR186W"/>
<dbReference type="PeptideAtlas" id="Q06287"/>
<dbReference type="TopDownProteomics" id="Q06287"/>
<dbReference type="EnsemblFungi" id="YLR186W_mRNA">
    <property type="protein sequence ID" value="YLR186W"/>
    <property type="gene ID" value="YLR186W"/>
</dbReference>
<dbReference type="GeneID" id="850883"/>
<dbReference type="KEGG" id="sce:YLR186W"/>
<dbReference type="AGR" id="SGD:S000004176"/>
<dbReference type="SGD" id="S000004176">
    <property type="gene designation" value="EMG1"/>
</dbReference>
<dbReference type="VEuPathDB" id="FungiDB:YLR186W"/>
<dbReference type="eggNOG" id="KOG3073">
    <property type="taxonomic scope" value="Eukaryota"/>
</dbReference>
<dbReference type="GeneTree" id="ENSGT00390000000305"/>
<dbReference type="HOGENOM" id="CLU_055846_1_1_1"/>
<dbReference type="InParanoid" id="Q06287"/>
<dbReference type="OMA" id="VHNTFEL"/>
<dbReference type="OrthoDB" id="269804at2759"/>
<dbReference type="BioCyc" id="MetaCyc:G3O-32309-MONOMER"/>
<dbReference type="BioCyc" id="YEAST:G3O-32309-MONOMER"/>
<dbReference type="Reactome" id="R-SCE-6791226">
    <property type="pathway name" value="Major pathway of rRNA processing in the nucleolus and cytosol"/>
</dbReference>
<dbReference type="BioGRID-ORCS" id="850883">
    <property type="hits" value="6 hits in 10 CRISPR screens"/>
</dbReference>
<dbReference type="EvolutionaryTrace" id="Q06287"/>
<dbReference type="PRO" id="PR:Q06287"/>
<dbReference type="Proteomes" id="UP000002311">
    <property type="component" value="Chromosome XII"/>
</dbReference>
<dbReference type="RNAct" id="Q06287">
    <property type="molecule type" value="protein"/>
</dbReference>
<dbReference type="GO" id="GO:0030686">
    <property type="term" value="C:90S preribosome"/>
    <property type="evidence" value="ECO:0000314"/>
    <property type="project" value="GO_Central"/>
</dbReference>
<dbReference type="GO" id="GO:0005737">
    <property type="term" value="C:cytoplasm"/>
    <property type="evidence" value="ECO:0000314"/>
    <property type="project" value="SGD"/>
</dbReference>
<dbReference type="GO" id="GO:0005880">
    <property type="term" value="C:nuclear microtubule"/>
    <property type="evidence" value="ECO:0000314"/>
    <property type="project" value="SGD"/>
</dbReference>
<dbReference type="GO" id="GO:0034399">
    <property type="term" value="C:nuclear periphery"/>
    <property type="evidence" value="ECO:0000314"/>
    <property type="project" value="SGD"/>
</dbReference>
<dbReference type="GO" id="GO:0005730">
    <property type="term" value="C:nucleolus"/>
    <property type="evidence" value="ECO:0000314"/>
    <property type="project" value="SGD"/>
</dbReference>
<dbReference type="GO" id="GO:0005654">
    <property type="term" value="C:nucleoplasm"/>
    <property type="evidence" value="ECO:0000304"/>
    <property type="project" value="Reactome"/>
</dbReference>
<dbReference type="GO" id="GO:0005634">
    <property type="term" value="C:nucleus"/>
    <property type="evidence" value="ECO:0000314"/>
    <property type="project" value="SGD"/>
</dbReference>
<dbReference type="GO" id="GO:0032040">
    <property type="term" value="C:small-subunit processome"/>
    <property type="evidence" value="ECO:0000314"/>
    <property type="project" value="SGD"/>
</dbReference>
<dbReference type="GO" id="GO:0042802">
    <property type="term" value="F:identical protein binding"/>
    <property type="evidence" value="ECO:0000353"/>
    <property type="project" value="IntAct"/>
</dbReference>
<dbReference type="GO" id="GO:0070037">
    <property type="term" value="F:rRNA (pseudouridine) methyltransferase activity"/>
    <property type="evidence" value="ECO:0000315"/>
    <property type="project" value="SGD"/>
</dbReference>
<dbReference type="GO" id="GO:0019843">
    <property type="term" value="F:rRNA binding"/>
    <property type="evidence" value="ECO:0000314"/>
    <property type="project" value="UniProtKB"/>
</dbReference>
<dbReference type="GO" id="GO:0000480">
    <property type="term" value="P:endonucleolytic cleavage in 5'-ETS of tricistronic rRNA transcript (SSU-rRNA, 5.8S rRNA, LSU-rRNA)"/>
    <property type="evidence" value="ECO:0000315"/>
    <property type="project" value="SGD"/>
</dbReference>
<dbReference type="GO" id="GO:0000447">
    <property type="term" value="P:endonucleolytic cleavage in ITS1 to separate SSU-rRNA from 5.8S rRNA and LSU-rRNA from tricistronic rRNA transcript (SSU-rRNA, 5.8S rRNA, LSU-rRNA)"/>
    <property type="evidence" value="ECO:0000315"/>
    <property type="project" value="SGD"/>
</dbReference>
<dbReference type="GO" id="GO:0000472">
    <property type="term" value="P:endonucleolytic cleavage to generate mature 5'-end of SSU-rRNA from (SSU-rRNA, 5.8S rRNA, LSU-rRNA)"/>
    <property type="evidence" value="ECO:0000315"/>
    <property type="project" value="SGD"/>
</dbReference>
<dbReference type="GO" id="GO:0030490">
    <property type="term" value="P:maturation of SSU-rRNA"/>
    <property type="evidence" value="ECO:0000303"/>
    <property type="project" value="ComplexPortal"/>
</dbReference>
<dbReference type="GO" id="GO:0042274">
    <property type="term" value="P:ribosomal small subunit biogenesis"/>
    <property type="evidence" value="ECO:0000315"/>
    <property type="project" value="SGD"/>
</dbReference>
<dbReference type="GO" id="GO:0070475">
    <property type="term" value="P:rRNA base methylation"/>
    <property type="evidence" value="ECO:0000315"/>
    <property type="project" value="SGD"/>
</dbReference>
<dbReference type="GO" id="GO:0031167">
    <property type="term" value="P:rRNA methylation"/>
    <property type="evidence" value="ECO:0000304"/>
    <property type="project" value="Reactome"/>
</dbReference>
<dbReference type="GO" id="GO:0006364">
    <property type="term" value="P:rRNA processing"/>
    <property type="evidence" value="ECO:0000315"/>
    <property type="project" value="SGD"/>
</dbReference>
<dbReference type="CDD" id="cd18088">
    <property type="entry name" value="Nep1-like"/>
    <property type="match status" value="1"/>
</dbReference>
<dbReference type="FunFam" id="3.40.1280.10:FF:000003">
    <property type="entry name" value="Ribosomal RNA small subunit methyltransferase"/>
    <property type="match status" value="1"/>
</dbReference>
<dbReference type="Gene3D" id="3.40.1280.10">
    <property type="match status" value="1"/>
</dbReference>
<dbReference type="InterPro" id="IPR029028">
    <property type="entry name" value="Alpha/beta_knot_MTases"/>
</dbReference>
<dbReference type="InterPro" id="IPR005304">
    <property type="entry name" value="Rbsml_bgen_MeTrfase_EMG1/NEP1"/>
</dbReference>
<dbReference type="InterPro" id="IPR029026">
    <property type="entry name" value="tRNA_m1G_MTases_N"/>
</dbReference>
<dbReference type="PANTHER" id="PTHR12636">
    <property type="entry name" value="NEP1/MRA1"/>
    <property type="match status" value="1"/>
</dbReference>
<dbReference type="PANTHER" id="PTHR12636:SF5">
    <property type="entry name" value="RIBOSOMAL RNA SMALL SUBUNIT METHYLTRANSFERASE NEP1"/>
    <property type="match status" value="1"/>
</dbReference>
<dbReference type="Pfam" id="PF03587">
    <property type="entry name" value="EMG1"/>
    <property type="match status" value="1"/>
</dbReference>
<dbReference type="SUPFAM" id="SSF75217">
    <property type="entry name" value="alpha/beta knot"/>
    <property type="match status" value="1"/>
</dbReference>
<organism>
    <name type="scientific">Saccharomyces cerevisiae (strain ATCC 204508 / S288c)</name>
    <name type="common">Baker's yeast</name>
    <dbReference type="NCBI Taxonomy" id="559292"/>
    <lineage>
        <taxon>Eukaryota</taxon>
        <taxon>Fungi</taxon>
        <taxon>Dikarya</taxon>
        <taxon>Ascomycota</taxon>
        <taxon>Saccharomycotina</taxon>
        <taxon>Saccharomycetes</taxon>
        <taxon>Saccharomycetales</taxon>
        <taxon>Saccharomycetaceae</taxon>
        <taxon>Saccharomyces</taxon>
    </lineage>
</organism>
<comment type="function">
    <text evidence="1 2 3 6 7">S-adenosyl-L-methionine-dependent pseudouridine N(1)-methyltransferase that methylates pseudouridine at position 1189 (Psi1189) in 18S rRNA. Involved the biosynthesis of the hypermodified N1-methyl-N3-(3-amino-3-carboxypropyl) pseudouridine (m1acp3-Psi) conserved in eukaryotic 18S rRNA. N1-methylation is independent on acp-modification at the N3-position of U1191. Also has an essential role in 40S ribosomal subunit biogenesis independent on its methyltransferase activity, facilitating the incorporation of ribosomal protein S19 (RPS19A/RPS19B) during the formation of pre-ribosomes.</text>
</comment>
<comment type="catalytic activity">
    <reaction evidence="6">
        <text>pseudouridine(1191) in yeast 18S rRNA + S-adenosyl-L-methionine = N(1)-methylpseudouridine(1191) in yeast 18S rRNA + S-adenosyl-L-homocysteine + H(+)</text>
        <dbReference type="Rhea" id="RHEA:54308"/>
        <dbReference type="Rhea" id="RHEA-COMP:13851"/>
        <dbReference type="Rhea" id="RHEA-COMP:13852"/>
        <dbReference type="ChEBI" id="CHEBI:15378"/>
        <dbReference type="ChEBI" id="CHEBI:57856"/>
        <dbReference type="ChEBI" id="CHEBI:59789"/>
        <dbReference type="ChEBI" id="CHEBI:65314"/>
        <dbReference type="ChEBI" id="CHEBI:74890"/>
        <dbReference type="EC" id="2.1.1.260"/>
    </reaction>
</comment>
<comment type="subunit">
    <text evidence="1 3 4">Homodimer. Interacts with snoRNA U3. Interacts with NOP14 and MPP10. Component of the ribosomal small subunit (SSU) processome composed of at least 40 protein subunits and snoRNA U3.</text>
</comment>
<comment type="interaction">
    <interactant intactId="EBI-11979">
        <id>Q06287</id>
    </interactant>
    <interactant intactId="EBI-11979">
        <id>Q06287</id>
        <label>EMG1</label>
    </interactant>
    <organismsDiffer>false</organismsDiffer>
    <experiments>3</experiments>
</comment>
<comment type="interaction">
    <interactant intactId="EBI-11979">
        <id>Q06287</id>
    </interactant>
    <interactant intactId="EBI-35157">
        <id>Q99207</id>
        <label>NOP14</label>
    </interactant>
    <organismsDiffer>false</organismsDiffer>
    <experiments>8</experiments>
</comment>
<comment type="subcellular location">
    <subcellularLocation>
        <location evidence="1 3 6">Nucleus</location>
        <location evidence="1 3 6">Nucleolus</location>
    </subcellularLocation>
</comment>
<comment type="disruption phenotype">
    <text evidence="4">Depletion of EMG1 affects growth and leads to strong ribosome biogenesis defects, with defects in 20S pre-rRNA and mature 18S rRNA species.</text>
</comment>
<comment type="similarity">
    <text evidence="12">Belongs to the class IV-like SAM-binding methyltransferase superfamily. RNA methyltransferase NEP1 family.</text>
</comment>
<sequence>MVEDSRVRDALKGGDQKALPASLVPQAPPVLTSKDKITKRMIVVLAMASLETHKISSNGPGGDKYVLLNCDDHQGLLKKMGRDISEARPDITHQCLLTLLDSPINKAGKLQVYIQTSRGILIEVNPTVRIPRTFKRFSGLMVQLLHKLSIRSVNSEEKLLKVIKNPITDHLPTKCRKVTLSFDAPVIRVQDYIEKLDDDESICVFVGAMARGKDNFADEYVDEKVGLSNYPLSASVACSKFCHGAEDAWNIL</sequence>
<evidence type="ECO:0000269" key="1">
    <source>
    </source>
</evidence>
<evidence type="ECO:0000269" key="2">
    <source>
    </source>
</evidence>
<evidence type="ECO:0000269" key="3">
    <source>
    </source>
</evidence>
<evidence type="ECO:0000269" key="4">
    <source>
    </source>
</evidence>
<evidence type="ECO:0000269" key="5">
    <source>
    </source>
</evidence>
<evidence type="ECO:0000269" key="6">
    <source>
    </source>
</evidence>
<evidence type="ECO:0000269" key="7">
    <source>
    </source>
</evidence>
<evidence type="ECO:0000303" key="8">
    <source>
    </source>
</evidence>
<evidence type="ECO:0000303" key="9">
    <source>
    </source>
</evidence>
<evidence type="ECO:0000303" key="10">
    <source>
    </source>
</evidence>
<evidence type="ECO:0000303" key="11">
    <source>
    </source>
</evidence>
<evidence type="ECO:0000305" key="12"/>
<evidence type="ECO:0000305" key="13">
    <source>
    </source>
</evidence>
<evidence type="ECO:0000312" key="14">
    <source>
        <dbReference type="SGD" id="S000004176"/>
    </source>
</evidence>
<evidence type="ECO:0007829" key="15">
    <source>
        <dbReference type="PDB" id="2V3J"/>
    </source>
</evidence>
<evidence type="ECO:0007829" key="16">
    <source>
        <dbReference type="PDB" id="3OII"/>
    </source>
</evidence>
<evidence type="ECO:0007829" key="17">
    <source>
        <dbReference type="PDB" id="3OIN"/>
    </source>
</evidence>
<protein>
    <recommendedName>
        <fullName evidence="13">Ribosomal RNA small subunit methyltransferase NEP1</fullName>
        <ecNumber evidence="6">2.1.1.260</ecNumber>
    </recommendedName>
    <alternativeName>
        <fullName evidence="10">18S rRNA (pseudouridine(1189)-N1)-methyltransferase</fullName>
        <shortName evidence="10">18S rRNA Psi1189 methyltransferase</shortName>
    </alternativeName>
    <alternativeName>
        <fullName evidence="8">Essential for mitotic growth protein 1</fullName>
    </alternativeName>
    <alternativeName>
        <fullName evidence="9">Nucleolar essential protein 1</fullName>
    </alternativeName>
</protein>
<proteinExistence type="evidence at protein level"/>
<accession>Q06287</accession>
<accession>D6VYI9</accession>
<accession>E9P8U2</accession>
<keyword id="KW-0002">3D-structure</keyword>
<keyword id="KW-0489">Methyltransferase</keyword>
<keyword id="KW-0539">Nucleus</keyword>
<keyword id="KW-1185">Reference proteome</keyword>
<keyword id="KW-0687">Ribonucleoprotein</keyword>
<keyword id="KW-0690">Ribosome biogenesis</keyword>
<keyword id="KW-0694">RNA-binding</keyword>
<keyword id="KW-0698">rRNA processing</keyword>
<keyword id="KW-0699">rRNA-binding</keyword>
<keyword id="KW-0949">S-adenosyl-L-methionine</keyword>
<keyword id="KW-0808">Transferase</keyword>
<gene>
    <name evidence="8" type="primary">EMG1</name>
    <name evidence="9" type="synonym">NEP1</name>
    <name evidence="14" type="ordered locus">YLR186W</name>
    <name type="ORF">L9470.5</name>
</gene>
<reference key="1">
    <citation type="journal article" date="1997" name="Nature">
        <title>The nucleotide sequence of Saccharomyces cerevisiae chromosome XII.</title>
        <authorList>
            <person name="Johnston M."/>
            <person name="Hillier L.W."/>
            <person name="Riles L."/>
            <person name="Albermann K."/>
            <person name="Andre B."/>
            <person name="Ansorge W."/>
            <person name="Benes V."/>
            <person name="Brueckner M."/>
            <person name="Delius H."/>
            <person name="Dubois E."/>
            <person name="Duesterhoeft A."/>
            <person name="Entian K.-D."/>
            <person name="Floeth M."/>
            <person name="Goffeau A."/>
            <person name="Hebling U."/>
            <person name="Heumann K."/>
            <person name="Heuss-Neitzel D."/>
            <person name="Hilbert H."/>
            <person name="Hilger F."/>
            <person name="Kleine K."/>
            <person name="Koetter P."/>
            <person name="Louis E.J."/>
            <person name="Messenguy F."/>
            <person name="Mewes H.-W."/>
            <person name="Miosga T."/>
            <person name="Moestl D."/>
            <person name="Mueller-Auer S."/>
            <person name="Nentwich U."/>
            <person name="Obermaier B."/>
            <person name="Piravandi E."/>
            <person name="Pohl T.M."/>
            <person name="Portetelle D."/>
            <person name="Purnelle B."/>
            <person name="Rechmann S."/>
            <person name="Rieger M."/>
            <person name="Rinke M."/>
            <person name="Rose M."/>
            <person name="Scharfe M."/>
            <person name="Scherens B."/>
            <person name="Scholler P."/>
            <person name="Schwager C."/>
            <person name="Schwarz S."/>
            <person name="Underwood A.P."/>
            <person name="Urrestarazu L.A."/>
            <person name="Vandenbol M."/>
            <person name="Verhasselt P."/>
            <person name="Vierendeels F."/>
            <person name="Voet M."/>
            <person name="Volckaert G."/>
            <person name="Voss H."/>
            <person name="Wambutt R."/>
            <person name="Wedler E."/>
            <person name="Wedler H."/>
            <person name="Zimmermann F.K."/>
            <person name="Zollner A."/>
            <person name="Hani J."/>
            <person name="Hoheisel J.D."/>
        </authorList>
    </citation>
    <scope>NUCLEOTIDE SEQUENCE [LARGE SCALE GENOMIC DNA]</scope>
    <source>
        <strain>ATCC 204508 / S288c</strain>
    </source>
</reference>
<reference key="2">
    <citation type="journal article" date="2014" name="G3 (Bethesda)">
        <title>The reference genome sequence of Saccharomyces cerevisiae: Then and now.</title>
        <authorList>
            <person name="Engel S.R."/>
            <person name="Dietrich F.S."/>
            <person name="Fisk D.G."/>
            <person name="Binkley G."/>
            <person name="Balakrishnan R."/>
            <person name="Costanzo M.C."/>
            <person name="Dwight S.S."/>
            <person name="Hitz B.C."/>
            <person name="Karra K."/>
            <person name="Nash R.S."/>
            <person name="Weng S."/>
            <person name="Wong E.D."/>
            <person name="Lloyd P."/>
            <person name="Skrzypek M.S."/>
            <person name="Miyasato S.R."/>
            <person name="Simison M."/>
            <person name="Cherry J.M."/>
        </authorList>
    </citation>
    <scope>GENOME REANNOTATION</scope>
    <source>
        <strain>ATCC 204508 / S288c</strain>
    </source>
</reference>
<reference key="3">
    <citation type="journal article" date="2007" name="Genome Res.">
        <title>Approaching a complete repository of sequence-verified protein-encoding clones for Saccharomyces cerevisiae.</title>
        <authorList>
            <person name="Hu Y."/>
            <person name="Rolfs A."/>
            <person name="Bhullar B."/>
            <person name="Murthy T.V.S."/>
            <person name="Zhu C."/>
            <person name="Berger M.F."/>
            <person name="Camargo A.A."/>
            <person name="Kelley F."/>
            <person name="McCarron S."/>
            <person name="Jepson D."/>
            <person name="Richardson A."/>
            <person name="Raphael J."/>
            <person name="Moreira D."/>
            <person name="Taycher E."/>
            <person name="Zuo D."/>
            <person name="Mohr S."/>
            <person name="Kane M.F."/>
            <person name="Williamson J."/>
            <person name="Simpson A.J.G."/>
            <person name="Bulyk M.L."/>
            <person name="Harlow E."/>
            <person name="Marsischky G."/>
            <person name="Kolodner R.D."/>
            <person name="LaBaer J."/>
        </authorList>
    </citation>
    <scope>NUCLEOTIDE SEQUENCE [GENOMIC DNA]</scope>
    <source>
        <strain>ATCC 204508 / S288c</strain>
    </source>
</reference>
<reference key="4">
    <citation type="journal article" date="2001" name="Mol. Biol. Cell">
        <title>Novel stress-responsive genes EMG1 and NOP14 encode conserved, interacting proteins required for 40S ribosome biogenesis.</title>
        <authorList>
            <person name="Liu P.C."/>
            <person name="Thiele D.J."/>
        </authorList>
    </citation>
    <scope>FUNCTION</scope>
    <scope>INTERACTION WITH NOP14</scope>
    <scope>SUBCELLULAR LOCATION</scope>
</reference>
<reference key="5">
    <citation type="journal article" date="2002" name="Curr. Genet.">
        <title>Nep1p (Emg1p), a novel protein conserved in eukaryotes and archaea, is involved in ribosome biogenesis.</title>
        <authorList>
            <person name="Eschrich D."/>
            <person name="Buchhaupt M."/>
            <person name="Koetter P."/>
            <person name="Entian K.-D."/>
        </authorList>
    </citation>
    <scope>FUNCTION</scope>
</reference>
<reference key="6">
    <citation type="journal article" date="2004" name="Eukaryot. Cell">
        <title>The small-subunit processome is a ribosome assembly intermediate.</title>
        <authorList>
            <person name="Bernstein K.A."/>
            <person name="Gallagher J.E.G."/>
            <person name="Mitchell B.M."/>
            <person name="Granneman S."/>
            <person name="Baserga S.J."/>
        </authorList>
    </citation>
    <scope>FUNCTION</scope>
    <scope>INTERACTION WITH MPP10 AND SNORNA U3</scope>
    <scope>IDENTIFICATION IN SSU PROCESSOME</scope>
    <scope>SUBCELLULAR LOCATION</scope>
</reference>
<reference key="7">
    <citation type="journal article" date="2008" name="Nucleic Acids Res.">
        <title>The crystal structure of Nep1 reveals an extended SPOUT-class methyltransferase fold and a pre-organized SAM-binding site.</title>
        <authorList>
            <person name="Taylor A.B."/>
            <person name="Meyer B."/>
            <person name="Leal B.Z."/>
            <person name="Kotter P."/>
            <person name="Schirf V."/>
            <person name="Demeler B."/>
            <person name="Hart P.J."/>
            <person name="Entian K.D."/>
            <person name="Wohnert J."/>
        </authorList>
    </citation>
    <scope>MUTAGENESIS OF ARG-88; ARG-129; ARG-132 AND ARG-136</scope>
</reference>
<reference key="8">
    <citation type="journal article" date="2011" name="Nucleic Acids Res.">
        <title>The Bowen-Conradi syndrome protein Nep1 (Emg1) has a dual role in eukaryotic ribosome biogenesis, as an essential assembly factor and in the methylation of Psi1191 in yeast 18S rRNA.</title>
        <authorList>
            <person name="Meyer B."/>
            <person name="Wurm J.P."/>
            <person name="Kotter P."/>
            <person name="Leisegang M.S."/>
            <person name="Schilling V."/>
            <person name="Buchhaupt M."/>
            <person name="Held M."/>
            <person name="Bahr U."/>
            <person name="Karas M."/>
            <person name="Heckel A."/>
            <person name="Bohnsack M.T."/>
            <person name="Wohnert J."/>
            <person name="Entian K.D."/>
        </authorList>
    </citation>
    <scope>FUNCTION</scope>
    <scope>CATALYTIC ACTIVITY</scope>
    <scope>SUBCELLULAR LOCATION</scope>
    <scope>MUTAGENESIS OF ASP-90</scope>
</reference>
<reference key="9">
    <citation type="journal article" date="2008" name="Nucleic Acids Res.">
        <title>The yeast ribosome synthesis factor Emg1 is a novel member of the superfamily of alpha/beta knot fold methyltransferases.</title>
        <authorList>
            <person name="Leulliot N."/>
            <person name="Bohnsack M.T."/>
            <person name="Graille M."/>
            <person name="Tollervey D."/>
            <person name="Van Tilbeurgh H."/>
        </authorList>
    </citation>
    <scope>X-RAY CRYSTALLOGRAPHY (2.0 ANGSTROMS) OF APOPROTEIN AND COMPLEX WITH SAM</scope>
    <scope>RNA-BINDING</scope>
    <scope>SUBUNIT</scope>
    <scope>DISRUPTION PHENOTYPE</scope>
    <scope>MUTAGENESIS OF ARG-88; ASP-214; LEU-232 AND ALA-237</scope>
    <source>
        <strain>ATCC 204511 / S288c / AB972</strain>
    </source>
</reference>
<reference key="10">
    <citation type="journal article" date="2011" name="Nucleic Acids Res.">
        <title>Structural insight into the functional mechanism of Nep1/Emg1 N1-specific pseudouridine methyltransferase in ribosome biogenesis.</title>
        <authorList>
            <person name="Thomas S.R."/>
            <person name="Keller C.A."/>
            <person name="Szyk A."/>
            <person name="Cannon J.R."/>
            <person name="Laronde-Leblanc N.A."/>
        </authorList>
    </citation>
    <scope>X-RAY CRYSTALLOGRAPHY (1.85 ANGSTROMS) IN COMPLEXES WITH S-ADENOSYL-L-HOMOCYSTEINE AND COGNATE RNA</scope>
    <scope>FUNCTION</scope>
</reference>
<feature type="chain" id="PRO_0000158612" description="Ribosomal RNA small subunit methyltransferase NEP1">
    <location>
        <begin position="1"/>
        <end position="252"/>
    </location>
</feature>
<feature type="binding site" evidence="4 7">
    <location>
        <position position="180"/>
    </location>
    <ligand>
        <name>S-adenosyl-L-methionine</name>
        <dbReference type="ChEBI" id="CHEBI:59789"/>
    </ligand>
</feature>
<feature type="binding site" evidence="4 7">
    <location>
        <position position="207"/>
    </location>
    <ligand>
        <name>S-adenosyl-L-methionine</name>
        <dbReference type="ChEBI" id="CHEBI:59789"/>
    </ligand>
</feature>
<feature type="binding site" evidence="4 7">
    <location>
        <begin position="212"/>
        <end position="214"/>
    </location>
    <ligand>
        <name>S-adenosyl-L-methionine</name>
        <dbReference type="ChEBI" id="CHEBI:59789"/>
    </ligand>
</feature>
<feature type="binding site" evidence="4 7">
    <location>
        <begin position="227"/>
        <end position="232"/>
    </location>
    <ligand>
        <name>S-adenosyl-L-methionine</name>
        <dbReference type="ChEBI" id="CHEBI:59789"/>
    </ligand>
</feature>
<feature type="site" description="Interaction with substrate rRNA" evidence="7">
    <location>
        <position position="88"/>
    </location>
</feature>
<feature type="site" description="Stabilizes Arg-88" evidence="11">
    <location>
        <position position="90"/>
    </location>
</feature>
<feature type="site" description="Interaction with substrate rRNA" evidence="7">
    <location>
        <position position="129"/>
    </location>
</feature>
<feature type="site" description="Interaction with substrate rRNA" evidence="7">
    <location>
        <position position="132"/>
    </location>
</feature>
<feature type="site" description="Interaction with substrate rRNA" evidence="7">
    <location>
        <position position="136"/>
    </location>
</feature>
<feature type="mutagenesis site" description="Loss of substrate rRNA binding." evidence="5">
    <original>R</original>
    <variation>A</variation>
    <location>
        <position position="88"/>
    </location>
</feature>
<feature type="mutagenesis site" description="Loss of substrate rRNA binding. No effect on growth." evidence="4">
    <original>R</original>
    <variation>D</variation>
    <location>
        <position position="88"/>
    </location>
</feature>
<feature type="mutagenesis site" description="Loses its exclusive nucleolar localization and mislocalizes to the cytoplasm." evidence="6">
    <original>D</original>
    <variation>G</variation>
    <location>
        <position position="90"/>
    </location>
</feature>
<feature type="mutagenesis site" description="Loss of substrate rRNA binding." evidence="5">
    <original>R</original>
    <variation>A</variation>
    <location>
        <position position="129"/>
    </location>
</feature>
<feature type="mutagenesis site" description="Loss of substrate rRNA binding." evidence="5">
    <original>R</original>
    <variation>A</variation>
    <location>
        <position position="132"/>
    </location>
</feature>
<feature type="mutagenesis site" description="Loss of substrate rRNA binding." evidence="5">
    <original>R</original>
    <variation>A</variation>
    <location>
        <position position="136"/>
    </location>
</feature>
<feature type="mutagenesis site" description="Almost complete loss of SAM binding. No effect on growth and ribosome biogenesis." evidence="4">
    <original>D</original>
    <variation>R</variation>
    <location>
        <position position="214"/>
    </location>
</feature>
<feature type="mutagenesis site" description="Almost complete loss of SAM binding. No effect on growth and ribosome biogenesis." evidence="4">
    <original>L</original>
    <variation>S</variation>
    <location>
        <position position="232"/>
    </location>
</feature>
<feature type="mutagenesis site" description="Almost complete loss of SAM binding. No effect on growth and ribosome biogenesis." evidence="4">
    <original>A</original>
    <variation>D</variation>
    <location>
        <position position="237"/>
    </location>
</feature>
<feature type="sequence conflict" description="In Ref. 3; AAS56267." evidence="12" ref="3">
    <original>I</original>
    <variation>T</variation>
    <location>
        <position position="114"/>
    </location>
</feature>
<feature type="strand" evidence="15">
    <location>
        <begin position="36"/>
        <end position="38"/>
    </location>
</feature>
<feature type="strand" evidence="16">
    <location>
        <begin position="41"/>
        <end position="48"/>
    </location>
</feature>
<feature type="strand" evidence="17">
    <location>
        <begin position="52"/>
        <end position="54"/>
    </location>
</feature>
<feature type="strand" evidence="17">
    <location>
        <begin position="65"/>
        <end position="67"/>
    </location>
</feature>
<feature type="turn" evidence="16">
    <location>
        <begin position="70"/>
        <end position="72"/>
    </location>
</feature>
<feature type="helix" evidence="16">
    <location>
        <begin position="74"/>
        <end position="79"/>
    </location>
</feature>
<feature type="helix" evidence="16">
    <location>
        <begin position="84"/>
        <end position="86"/>
    </location>
</feature>
<feature type="helix" evidence="16">
    <location>
        <begin position="89"/>
        <end position="100"/>
    </location>
</feature>
<feature type="helix" evidence="16">
    <location>
        <begin position="103"/>
        <end position="106"/>
    </location>
</feature>
<feature type="strand" evidence="16">
    <location>
        <begin position="110"/>
        <end position="116"/>
    </location>
</feature>
<feature type="strand" evidence="16">
    <location>
        <begin position="121"/>
        <end position="124"/>
    </location>
</feature>
<feature type="helix" evidence="16">
    <location>
        <begin position="134"/>
        <end position="147"/>
    </location>
</feature>
<feature type="strand" evidence="16">
    <location>
        <begin position="148"/>
        <end position="152"/>
    </location>
</feature>
<feature type="strand" evidence="16">
    <location>
        <begin position="155"/>
        <end position="163"/>
    </location>
</feature>
<feature type="helix" evidence="16">
    <location>
        <begin position="167"/>
        <end position="169"/>
    </location>
</feature>
<feature type="strand" evidence="16">
    <location>
        <begin position="173"/>
        <end position="180"/>
    </location>
</feature>
<feature type="helix" evidence="16">
    <location>
        <begin position="189"/>
        <end position="194"/>
    </location>
</feature>
<feature type="strand" evidence="16">
    <location>
        <begin position="201"/>
        <end position="207"/>
    </location>
</feature>
<feature type="strand" evidence="16">
    <location>
        <begin position="209"/>
        <end position="211"/>
    </location>
</feature>
<feature type="turn" evidence="16">
    <location>
        <begin position="216"/>
        <end position="220"/>
    </location>
</feature>
<feature type="strand" evidence="16">
    <location>
        <begin position="222"/>
        <end position="227"/>
    </location>
</feature>
<feature type="helix" evidence="16">
    <location>
        <begin position="234"/>
        <end position="248"/>
    </location>
</feature>